<evidence type="ECO:0000255" key="1">
    <source>
        <dbReference type="HAMAP-Rule" id="MF_00373"/>
    </source>
</evidence>
<evidence type="ECO:0000305" key="2"/>
<gene>
    <name evidence="1" type="primary">rpmB</name>
    <name type="ordered locus">BH0350</name>
</gene>
<comment type="similarity">
    <text evidence="1">Belongs to the bacterial ribosomal protein bL28 family.</text>
</comment>
<reference key="1">
    <citation type="submission" date="2004-12" db="EMBL/GenBank/DDBJ databases">
        <title>The genome sequence of Borrelia hermsii and Borrelia turicatae: comparative analysis of two agents of endemic N. America relapsing fever.</title>
        <authorList>
            <person name="Porcella S.F."/>
            <person name="Raffel S.J."/>
            <person name="Schrumpf M.E."/>
            <person name="Montgomery B."/>
            <person name="Smith T."/>
            <person name="Schwan T.G."/>
        </authorList>
    </citation>
    <scope>NUCLEOTIDE SEQUENCE [LARGE SCALE GENOMIC DNA]</scope>
    <source>
        <strain>HS1 / DAH</strain>
    </source>
</reference>
<protein>
    <recommendedName>
        <fullName evidence="1">Large ribosomal subunit protein bL28</fullName>
    </recommendedName>
    <alternativeName>
        <fullName evidence="2">50S ribosomal protein L28</fullName>
    </alternativeName>
</protein>
<dbReference type="EMBL" id="CP000048">
    <property type="protein sequence ID" value="AAX16863.1"/>
    <property type="molecule type" value="Genomic_DNA"/>
</dbReference>
<dbReference type="RefSeq" id="WP_012422120.1">
    <property type="nucleotide sequence ID" value="NZ_CP073136.1"/>
</dbReference>
<dbReference type="SMR" id="B2S057"/>
<dbReference type="GeneID" id="71843160"/>
<dbReference type="KEGG" id="bhr:BH0350"/>
<dbReference type="HOGENOM" id="CLU_064548_3_2_12"/>
<dbReference type="Proteomes" id="UP000008834">
    <property type="component" value="Chromosome"/>
</dbReference>
<dbReference type="GO" id="GO:1990904">
    <property type="term" value="C:ribonucleoprotein complex"/>
    <property type="evidence" value="ECO:0007669"/>
    <property type="project" value="UniProtKB-KW"/>
</dbReference>
<dbReference type="GO" id="GO:0005840">
    <property type="term" value="C:ribosome"/>
    <property type="evidence" value="ECO:0007669"/>
    <property type="project" value="UniProtKB-KW"/>
</dbReference>
<dbReference type="GO" id="GO:0003735">
    <property type="term" value="F:structural constituent of ribosome"/>
    <property type="evidence" value="ECO:0007669"/>
    <property type="project" value="InterPro"/>
</dbReference>
<dbReference type="GO" id="GO:0006412">
    <property type="term" value="P:translation"/>
    <property type="evidence" value="ECO:0007669"/>
    <property type="project" value="UniProtKB-UniRule"/>
</dbReference>
<dbReference type="Gene3D" id="2.30.170.40">
    <property type="entry name" value="Ribosomal protein L28/L24"/>
    <property type="match status" value="1"/>
</dbReference>
<dbReference type="HAMAP" id="MF_00373">
    <property type="entry name" value="Ribosomal_bL28"/>
    <property type="match status" value="1"/>
</dbReference>
<dbReference type="InterPro" id="IPR026569">
    <property type="entry name" value="Ribosomal_bL28"/>
</dbReference>
<dbReference type="InterPro" id="IPR034704">
    <property type="entry name" value="Ribosomal_bL28/bL31-like_sf"/>
</dbReference>
<dbReference type="InterPro" id="IPR001383">
    <property type="entry name" value="Ribosomal_bL28_bact-type"/>
</dbReference>
<dbReference type="InterPro" id="IPR037147">
    <property type="entry name" value="Ribosomal_bL28_sf"/>
</dbReference>
<dbReference type="NCBIfam" id="TIGR00009">
    <property type="entry name" value="L28"/>
    <property type="match status" value="1"/>
</dbReference>
<dbReference type="PANTHER" id="PTHR13528">
    <property type="entry name" value="39S RIBOSOMAL PROTEIN L28, MITOCHONDRIAL"/>
    <property type="match status" value="1"/>
</dbReference>
<dbReference type="PANTHER" id="PTHR13528:SF2">
    <property type="entry name" value="LARGE RIBOSOMAL SUBUNIT PROTEIN BL28M"/>
    <property type="match status" value="1"/>
</dbReference>
<dbReference type="Pfam" id="PF00830">
    <property type="entry name" value="Ribosomal_L28"/>
    <property type="match status" value="1"/>
</dbReference>
<dbReference type="SUPFAM" id="SSF143800">
    <property type="entry name" value="L28p-like"/>
    <property type="match status" value="1"/>
</dbReference>
<feature type="chain" id="PRO_1000121590" description="Large ribosomal subunit protein bL28">
    <location>
        <begin position="1"/>
        <end position="92"/>
    </location>
</feature>
<accession>B2S057</accession>
<keyword id="KW-0687">Ribonucleoprotein</keyword>
<keyword id="KW-0689">Ribosomal protein</keyword>
<organism>
    <name type="scientific">Borrelia hermsii (strain HS1 / DAH)</name>
    <dbReference type="NCBI Taxonomy" id="314723"/>
    <lineage>
        <taxon>Bacteria</taxon>
        <taxon>Pseudomonadati</taxon>
        <taxon>Spirochaetota</taxon>
        <taxon>Spirochaetia</taxon>
        <taxon>Spirochaetales</taxon>
        <taxon>Borreliaceae</taxon>
        <taxon>Borrelia</taxon>
    </lineage>
</organism>
<proteinExistence type="inferred from homology"/>
<name>RL28_BORHD</name>
<sequence length="92" mass="10179">MGRECEITGKRTMFGNNVPRKGLAKKKGGAGQHIGVKTKRTFKVNLINKKFFIPELGKSVNIKISASALRSISKVGLSVFLKKNCKKIEDFI</sequence>